<comment type="similarity">
    <text evidence="2">Belongs to the acyl coenzyme A hydrolase family.</text>
</comment>
<proteinExistence type="inferred from homology"/>
<evidence type="ECO:0000255" key="1">
    <source>
        <dbReference type="PROSITE-ProRule" id="PRU01106"/>
    </source>
</evidence>
<evidence type="ECO:0000305" key="2"/>
<gene>
    <name type="ordered locus">BU274</name>
</gene>
<organism>
    <name type="scientific">Buchnera aphidicola subsp. Acyrthosiphon pisum (strain APS)</name>
    <name type="common">Acyrthosiphon pisum symbiotic bacterium</name>
    <dbReference type="NCBI Taxonomy" id="107806"/>
    <lineage>
        <taxon>Bacteria</taxon>
        <taxon>Pseudomonadati</taxon>
        <taxon>Pseudomonadota</taxon>
        <taxon>Gammaproteobacteria</taxon>
        <taxon>Enterobacterales</taxon>
        <taxon>Erwiniaceae</taxon>
        <taxon>Buchnera</taxon>
    </lineage>
</organism>
<reference key="1">
    <citation type="journal article" date="2000" name="Nature">
        <title>Genome sequence of the endocellular bacterial symbiont of aphids Buchnera sp. APS.</title>
        <authorList>
            <person name="Shigenobu S."/>
            <person name="Watanabe H."/>
            <person name="Hattori M."/>
            <person name="Sakaki Y."/>
            <person name="Ishikawa H."/>
        </authorList>
    </citation>
    <scope>NUCLEOTIDE SEQUENCE [LARGE SCALE GENOMIC DNA]</scope>
    <source>
        <strain>APS</strain>
    </source>
</reference>
<keyword id="KW-0378">Hydrolase</keyword>
<keyword id="KW-1185">Reference proteome</keyword>
<sequence length="135" mass="14724">MSEKNKLPKGIIVLKTLSMPENINANGDIFGGWIMSQMDLGGAILAKEISGGKVATVRVDSINFLKSVSVGDIVNCYANCIKIGKSSIKINVEIWIKKIYSKPLGQYYCAAEAIFIYVAINKTGQPRELLPMSII</sequence>
<protein>
    <recommendedName>
        <fullName>Uncharacterized acyl-CoA thioester hydrolase BU274</fullName>
        <ecNumber>3.1.2.-</ecNumber>
    </recommendedName>
</protein>
<dbReference type="EC" id="3.1.2.-"/>
<dbReference type="EMBL" id="BA000003">
    <property type="protein sequence ID" value="BAB12984.1"/>
    <property type="molecule type" value="Genomic_DNA"/>
</dbReference>
<dbReference type="RefSeq" id="NP_240098.1">
    <property type="nucleotide sequence ID" value="NC_002528.1"/>
</dbReference>
<dbReference type="SMR" id="P57362"/>
<dbReference type="STRING" id="563178.BUAP5A_269"/>
<dbReference type="EnsemblBacteria" id="BAB12984">
    <property type="protein sequence ID" value="BAB12984"/>
    <property type="gene ID" value="BAB12984"/>
</dbReference>
<dbReference type="KEGG" id="buc:BU274"/>
<dbReference type="PATRIC" id="fig|107806.10.peg.284"/>
<dbReference type="eggNOG" id="COG1607">
    <property type="taxonomic scope" value="Bacteria"/>
</dbReference>
<dbReference type="HOGENOM" id="CLU_050164_2_0_6"/>
<dbReference type="BioCyc" id="BAPH107806:GBZJ-269-MONOMER"/>
<dbReference type="Proteomes" id="UP000001806">
    <property type="component" value="Chromosome"/>
</dbReference>
<dbReference type="GO" id="GO:0005829">
    <property type="term" value="C:cytosol"/>
    <property type="evidence" value="ECO:0007669"/>
    <property type="project" value="TreeGrafter"/>
</dbReference>
<dbReference type="GO" id="GO:0052816">
    <property type="term" value="F:long-chain fatty acyl-CoA hydrolase activity"/>
    <property type="evidence" value="ECO:0007669"/>
    <property type="project" value="TreeGrafter"/>
</dbReference>
<dbReference type="GO" id="GO:0006637">
    <property type="term" value="P:acyl-CoA metabolic process"/>
    <property type="evidence" value="ECO:0007669"/>
    <property type="project" value="TreeGrafter"/>
</dbReference>
<dbReference type="GO" id="GO:0009062">
    <property type="term" value="P:fatty acid catabolic process"/>
    <property type="evidence" value="ECO:0007669"/>
    <property type="project" value="TreeGrafter"/>
</dbReference>
<dbReference type="CDD" id="cd03442">
    <property type="entry name" value="BFIT_BACH"/>
    <property type="match status" value="1"/>
</dbReference>
<dbReference type="FunFam" id="3.10.129.10:FF:000008">
    <property type="entry name" value="Acyl-CoA thioester hydrolase"/>
    <property type="match status" value="1"/>
</dbReference>
<dbReference type="Gene3D" id="3.10.129.10">
    <property type="entry name" value="Hotdog Thioesterase"/>
    <property type="match status" value="1"/>
</dbReference>
<dbReference type="InterPro" id="IPR040170">
    <property type="entry name" value="Cytosol_ACT"/>
</dbReference>
<dbReference type="InterPro" id="IPR033120">
    <property type="entry name" value="HOTDOG_ACOT"/>
</dbReference>
<dbReference type="InterPro" id="IPR029069">
    <property type="entry name" value="HotDog_dom_sf"/>
</dbReference>
<dbReference type="InterPro" id="IPR006683">
    <property type="entry name" value="Thioestr_dom"/>
</dbReference>
<dbReference type="NCBIfam" id="NF007970">
    <property type="entry name" value="PRK10694.1"/>
    <property type="match status" value="1"/>
</dbReference>
<dbReference type="PANTHER" id="PTHR11049">
    <property type="entry name" value="ACYL COENZYME A THIOESTER HYDROLASE"/>
    <property type="match status" value="1"/>
</dbReference>
<dbReference type="PANTHER" id="PTHR11049:SF5">
    <property type="entry name" value="ACYL-COA THIOESTER HYDROLASE YCIA"/>
    <property type="match status" value="1"/>
</dbReference>
<dbReference type="Pfam" id="PF03061">
    <property type="entry name" value="4HBT"/>
    <property type="match status" value="1"/>
</dbReference>
<dbReference type="SUPFAM" id="SSF54637">
    <property type="entry name" value="Thioesterase/thiol ester dehydrase-isomerase"/>
    <property type="match status" value="1"/>
</dbReference>
<dbReference type="PROSITE" id="PS51770">
    <property type="entry name" value="HOTDOG_ACOT"/>
    <property type="match status" value="1"/>
</dbReference>
<accession>P57362</accession>
<name>Y274_BUCAI</name>
<feature type="chain" id="PRO_0000053823" description="Uncharacterized acyl-CoA thioester hydrolase BU274">
    <location>
        <begin position="1"/>
        <end position="135"/>
    </location>
</feature>
<feature type="domain" description="HotDog ACOT-type" evidence="1">
    <location>
        <begin position="8"/>
        <end position="123"/>
    </location>
</feature>